<dbReference type="EC" id="2.7.1.148" evidence="1"/>
<dbReference type="EMBL" id="CP000301">
    <property type="protein sequence ID" value="ABD89879.1"/>
    <property type="molecule type" value="Genomic_DNA"/>
</dbReference>
<dbReference type="SMR" id="Q20YA7"/>
<dbReference type="STRING" id="316056.RPC_4356"/>
<dbReference type="KEGG" id="rpc:RPC_4356"/>
<dbReference type="eggNOG" id="COG1947">
    <property type="taxonomic scope" value="Bacteria"/>
</dbReference>
<dbReference type="HOGENOM" id="CLU_053057_1_0_5"/>
<dbReference type="OrthoDB" id="9809438at2"/>
<dbReference type="UniPathway" id="UPA00056">
    <property type="reaction ID" value="UER00094"/>
</dbReference>
<dbReference type="GO" id="GO:0050515">
    <property type="term" value="F:4-(cytidine 5'-diphospho)-2-C-methyl-D-erythritol kinase activity"/>
    <property type="evidence" value="ECO:0007669"/>
    <property type="project" value="UniProtKB-UniRule"/>
</dbReference>
<dbReference type="GO" id="GO:0005524">
    <property type="term" value="F:ATP binding"/>
    <property type="evidence" value="ECO:0007669"/>
    <property type="project" value="UniProtKB-UniRule"/>
</dbReference>
<dbReference type="GO" id="GO:0019288">
    <property type="term" value="P:isopentenyl diphosphate biosynthetic process, methylerythritol 4-phosphate pathway"/>
    <property type="evidence" value="ECO:0007669"/>
    <property type="project" value="UniProtKB-UniRule"/>
</dbReference>
<dbReference type="GO" id="GO:0016114">
    <property type="term" value="P:terpenoid biosynthetic process"/>
    <property type="evidence" value="ECO:0007669"/>
    <property type="project" value="InterPro"/>
</dbReference>
<dbReference type="Gene3D" id="3.30.230.10">
    <property type="match status" value="1"/>
</dbReference>
<dbReference type="Gene3D" id="3.30.70.890">
    <property type="entry name" value="GHMP kinase, C-terminal domain"/>
    <property type="match status" value="1"/>
</dbReference>
<dbReference type="HAMAP" id="MF_00061">
    <property type="entry name" value="IspE"/>
    <property type="match status" value="1"/>
</dbReference>
<dbReference type="InterPro" id="IPR013750">
    <property type="entry name" value="GHMP_kinase_C_dom"/>
</dbReference>
<dbReference type="InterPro" id="IPR036554">
    <property type="entry name" value="GHMP_kinase_C_sf"/>
</dbReference>
<dbReference type="InterPro" id="IPR006204">
    <property type="entry name" value="GHMP_kinase_N_dom"/>
</dbReference>
<dbReference type="InterPro" id="IPR004424">
    <property type="entry name" value="IspE"/>
</dbReference>
<dbReference type="InterPro" id="IPR020568">
    <property type="entry name" value="Ribosomal_Su5_D2-typ_SF"/>
</dbReference>
<dbReference type="InterPro" id="IPR014721">
    <property type="entry name" value="Ribsml_uS5_D2-typ_fold_subgr"/>
</dbReference>
<dbReference type="NCBIfam" id="TIGR00154">
    <property type="entry name" value="ispE"/>
    <property type="match status" value="1"/>
</dbReference>
<dbReference type="NCBIfam" id="NF011202">
    <property type="entry name" value="PRK14608.1"/>
    <property type="match status" value="1"/>
</dbReference>
<dbReference type="PANTHER" id="PTHR43527">
    <property type="entry name" value="4-DIPHOSPHOCYTIDYL-2-C-METHYL-D-ERYTHRITOL KINASE, CHLOROPLASTIC"/>
    <property type="match status" value="1"/>
</dbReference>
<dbReference type="PANTHER" id="PTHR43527:SF2">
    <property type="entry name" value="4-DIPHOSPHOCYTIDYL-2-C-METHYL-D-ERYTHRITOL KINASE, CHLOROPLASTIC"/>
    <property type="match status" value="1"/>
</dbReference>
<dbReference type="Pfam" id="PF08544">
    <property type="entry name" value="GHMP_kinases_C"/>
    <property type="match status" value="1"/>
</dbReference>
<dbReference type="Pfam" id="PF00288">
    <property type="entry name" value="GHMP_kinases_N"/>
    <property type="match status" value="1"/>
</dbReference>
<dbReference type="PIRSF" id="PIRSF010376">
    <property type="entry name" value="IspE"/>
    <property type="match status" value="1"/>
</dbReference>
<dbReference type="SUPFAM" id="SSF55060">
    <property type="entry name" value="GHMP Kinase, C-terminal domain"/>
    <property type="match status" value="1"/>
</dbReference>
<dbReference type="SUPFAM" id="SSF54211">
    <property type="entry name" value="Ribosomal protein S5 domain 2-like"/>
    <property type="match status" value="1"/>
</dbReference>
<proteinExistence type="inferred from homology"/>
<sequence>MARAAELSDVMSVQALHDEARAKVNLTLRVLGRRVDGYHELESVVAFADCADRLTLQAGSELSLTATGPRVQECGDNADNLVIKAARLLGERVADLRTGSFALDKQLPIAAGIGGGSADAAAALRLLARANDLALDDPRLIDAARKTGADVPVCLASKSCIMTGIGETLLPLALPRLPVVMVNPRVAVATKDVFAALGLRSGQLRVGVTDVVTAPKWPDQAAPLDAWIAVLAAGINDLEAPAKKLQPVIGEVLKLLGKARGARLARMSGSGATCFAIFADAAAAEAAAQSVSAAHPDWWVHAGTLG</sequence>
<keyword id="KW-0067">ATP-binding</keyword>
<keyword id="KW-0414">Isoprene biosynthesis</keyword>
<keyword id="KW-0418">Kinase</keyword>
<keyword id="KW-0547">Nucleotide-binding</keyword>
<keyword id="KW-0808">Transferase</keyword>
<gene>
    <name evidence="1" type="primary">ispE</name>
    <name type="ordered locus">RPC_4356</name>
</gene>
<comment type="function">
    <text evidence="1">Catalyzes the phosphorylation of the position 2 hydroxy group of 4-diphosphocytidyl-2C-methyl-D-erythritol.</text>
</comment>
<comment type="catalytic activity">
    <reaction evidence="1">
        <text>4-CDP-2-C-methyl-D-erythritol + ATP = 4-CDP-2-C-methyl-D-erythritol 2-phosphate + ADP + H(+)</text>
        <dbReference type="Rhea" id="RHEA:18437"/>
        <dbReference type="ChEBI" id="CHEBI:15378"/>
        <dbReference type="ChEBI" id="CHEBI:30616"/>
        <dbReference type="ChEBI" id="CHEBI:57823"/>
        <dbReference type="ChEBI" id="CHEBI:57919"/>
        <dbReference type="ChEBI" id="CHEBI:456216"/>
        <dbReference type="EC" id="2.7.1.148"/>
    </reaction>
</comment>
<comment type="pathway">
    <text evidence="1">Isoprenoid biosynthesis; isopentenyl diphosphate biosynthesis via DXP pathway; isopentenyl diphosphate from 1-deoxy-D-xylulose 5-phosphate: step 3/6.</text>
</comment>
<comment type="similarity">
    <text evidence="1">Belongs to the GHMP kinase family. IspE subfamily.</text>
</comment>
<name>ISPE_RHOPB</name>
<accession>Q20YA7</accession>
<evidence type="ECO:0000255" key="1">
    <source>
        <dbReference type="HAMAP-Rule" id="MF_00061"/>
    </source>
</evidence>
<organism>
    <name type="scientific">Rhodopseudomonas palustris (strain BisB18)</name>
    <dbReference type="NCBI Taxonomy" id="316056"/>
    <lineage>
        <taxon>Bacteria</taxon>
        <taxon>Pseudomonadati</taxon>
        <taxon>Pseudomonadota</taxon>
        <taxon>Alphaproteobacteria</taxon>
        <taxon>Hyphomicrobiales</taxon>
        <taxon>Nitrobacteraceae</taxon>
        <taxon>Rhodopseudomonas</taxon>
    </lineage>
</organism>
<feature type="chain" id="PRO_1000007881" description="4-diphosphocytidyl-2-C-methyl-D-erythritol kinase">
    <location>
        <begin position="1"/>
        <end position="306"/>
    </location>
</feature>
<feature type="active site" evidence="1">
    <location>
        <position position="23"/>
    </location>
</feature>
<feature type="active site" evidence="1">
    <location>
        <position position="150"/>
    </location>
</feature>
<feature type="binding site" evidence="1">
    <location>
        <begin position="108"/>
        <end position="118"/>
    </location>
    <ligand>
        <name>ATP</name>
        <dbReference type="ChEBI" id="CHEBI:30616"/>
    </ligand>
</feature>
<protein>
    <recommendedName>
        <fullName evidence="1">4-diphosphocytidyl-2-C-methyl-D-erythritol kinase</fullName>
        <shortName evidence="1">CMK</shortName>
        <ecNumber evidence="1">2.7.1.148</ecNumber>
    </recommendedName>
    <alternativeName>
        <fullName evidence="1">4-(cytidine-5'-diphospho)-2-C-methyl-D-erythritol kinase</fullName>
    </alternativeName>
</protein>
<reference key="1">
    <citation type="submission" date="2006-03" db="EMBL/GenBank/DDBJ databases">
        <title>Complete sequence of Rhodopseudomonas palustris BisB18.</title>
        <authorList>
            <consortium name="US DOE Joint Genome Institute"/>
            <person name="Copeland A."/>
            <person name="Lucas S."/>
            <person name="Lapidus A."/>
            <person name="Barry K."/>
            <person name="Detter J.C."/>
            <person name="Glavina del Rio T."/>
            <person name="Hammon N."/>
            <person name="Israni S."/>
            <person name="Dalin E."/>
            <person name="Tice H."/>
            <person name="Pitluck S."/>
            <person name="Chain P."/>
            <person name="Malfatti S."/>
            <person name="Shin M."/>
            <person name="Vergez L."/>
            <person name="Schmutz J."/>
            <person name="Larimer F."/>
            <person name="Land M."/>
            <person name="Hauser L."/>
            <person name="Pelletier D.A."/>
            <person name="Kyrpides N."/>
            <person name="Anderson I."/>
            <person name="Oda Y."/>
            <person name="Harwood C.S."/>
            <person name="Richardson P."/>
        </authorList>
    </citation>
    <scope>NUCLEOTIDE SEQUENCE [LARGE SCALE GENOMIC DNA]</scope>
    <source>
        <strain>BisB18</strain>
    </source>
</reference>